<accession>A9AWL1</accession>
<gene>
    <name evidence="1" type="primary">argH</name>
    <name type="ordered locus">Haur_4138</name>
</gene>
<comment type="catalytic activity">
    <reaction evidence="1">
        <text>2-(N(omega)-L-arginino)succinate = fumarate + L-arginine</text>
        <dbReference type="Rhea" id="RHEA:24020"/>
        <dbReference type="ChEBI" id="CHEBI:29806"/>
        <dbReference type="ChEBI" id="CHEBI:32682"/>
        <dbReference type="ChEBI" id="CHEBI:57472"/>
        <dbReference type="EC" id="4.3.2.1"/>
    </reaction>
</comment>
<comment type="pathway">
    <text evidence="1">Amino-acid biosynthesis; L-arginine biosynthesis; L-arginine from L-ornithine and carbamoyl phosphate: step 3/3.</text>
</comment>
<comment type="subcellular location">
    <subcellularLocation>
        <location evidence="1">Cytoplasm</location>
    </subcellularLocation>
</comment>
<comment type="similarity">
    <text evidence="1">Belongs to the lyase 1 family. Argininosuccinate lyase subfamily.</text>
</comment>
<keyword id="KW-0028">Amino-acid biosynthesis</keyword>
<keyword id="KW-0055">Arginine biosynthesis</keyword>
<keyword id="KW-0963">Cytoplasm</keyword>
<keyword id="KW-0456">Lyase</keyword>
<dbReference type="EC" id="4.3.2.1" evidence="1"/>
<dbReference type="EMBL" id="CP000875">
    <property type="protein sequence ID" value="ABX06770.1"/>
    <property type="molecule type" value="Genomic_DNA"/>
</dbReference>
<dbReference type="SMR" id="A9AWL1"/>
<dbReference type="FunCoup" id="A9AWL1">
    <property type="interactions" value="437"/>
</dbReference>
<dbReference type="STRING" id="316274.Haur_4138"/>
<dbReference type="KEGG" id="hau:Haur_4138"/>
<dbReference type="eggNOG" id="COG0165">
    <property type="taxonomic scope" value="Bacteria"/>
</dbReference>
<dbReference type="HOGENOM" id="CLU_027272_2_1_0"/>
<dbReference type="InParanoid" id="A9AWL1"/>
<dbReference type="UniPathway" id="UPA00068">
    <property type="reaction ID" value="UER00114"/>
</dbReference>
<dbReference type="Proteomes" id="UP000000787">
    <property type="component" value="Chromosome"/>
</dbReference>
<dbReference type="GO" id="GO:0005829">
    <property type="term" value="C:cytosol"/>
    <property type="evidence" value="ECO:0007669"/>
    <property type="project" value="TreeGrafter"/>
</dbReference>
<dbReference type="GO" id="GO:0004056">
    <property type="term" value="F:argininosuccinate lyase activity"/>
    <property type="evidence" value="ECO:0007669"/>
    <property type="project" value="UniProtKB-UniRule"/>
</dbReference>
<dbReference type="GO" id="GO:0042450">
    <property type="term" value="P:arginine biosynthetic process via ornithine"/>
    <property type="evidence" value="ECO:0007669"/>
    <property type="project" value="InterPro"/>
</dbReference>
<dbReference type="GO" id="GO:0006526">
    <property type="term" value="P:L-arginine biosynthetic process"/>
    <property type="evidence" value="ECO:0007669"/>
    <property type="project" value="UniProtKB-UniRule"/>
</dbReference>
<dbReference type="CDD" id="cd01359">
    <property type="entry name" value="Argininosuccinate_lyase"/>
    <property type="match status" value="1"/>
</dbReference>
<dbReference type="FunFam" id="1.10.275.10:FF:000002">
    <property type="entry name" value="Argininosuccinate lyase"/>
    <property type="match status" value="1"/>
</dbReference>
<dbReference type="FunFam" id="1.10.40.30:FF:000001">
    <property type="entry name" value="Argininosuccinate lyase"/>
    <property type="match status" value="1"/>
</dbReference>
<dbReference type="FunFam" id="1.20.200.10:FF:000015">
    <property type="entry name" value="argininosuccinate lyase isoform X2"/>
    <property type="match status" value="1"/>
</dbReference>
<dbReference type="Gene3D" id="1.10.40.30">
    <property type="entry name" value="Fumarase/aspartase (C-terminal domain)"/>
    <property type="match status" value="1"/>
</dbReference>
<dbReference type="Gene3D" id="1.20.200.10">
    <property type="entry name" value="Fumarase/aspartase (Central domain)"/>
    <property type="match status" value="1"/>
</dbReference>
<dbReference type="Gene3D" id="1.10.275.10">
    <property type="entry name" value="Fumarase/aspartase (N-terminal domain)"/>
    <property type="match status" value="1"/>
</dbReference>
<dbReference type="HAMAP" id="MF_00006">
    <property type="entry name" value="Arg_succ_lyase"/>
    <property type="match status" value="1"/>
</dbReference>
<dbReference type="InterPro" id="IPR029419">
    <property type="entry name" value="Arg_succ_lyase_C"/>
</dbReference>
<dbReference type="InterPro" id="IPR009049">
    <property type="entry name" value="Argininosuccinate_lyase"/>
</dbReference>
<dbReference type="InterPro" id="IPR024083">
    <property type="entry name" value="Fumarase/histidase_N"/>
</dbReference>
<dbReference type="InterPro" id="IPR020557">
    <property type="entry name" value="Fumarate_lyase_CS"/>
</dbReference>
<dbReference type="InterPro" id="IPR000362">
    <property type="entry name" value="Fumarate_lyase_fam"/>
</dbReference>
<dbReference type="InterPro" id="IPR022761">
    <property type="entry name" value="Fumarate_lyase_N"/>
</dbReference>
<dbReference type="InterPro" id="IPR008948">
    <property type="entry name" value="L-Aspartase-like"/>
</dbReference>
<dbReference type="NCBIfam" id="TIGR00838">
    <property type="entry name" value="argH"/>
    <property type="match status" value="1"/>
</dbReference>
<dbReference type="PANTHER" id="PTHR43814">
    <property type="entry name" value="ARGININOSUCCINATE LYASE"/>
    <property type="match status" value="1"/>
</dbReference>
<dbReference type="PANTHER" id="PTHR43814:SF1">
    <property type="entry name" value="ARGININOSUCCINATE LYASE"/>
    <property type="match status" value="1"/>
</dbReference>
<dbReference type="Pfam" id="PF14698">
    <property type="entry name" value="ASL_C2"/>
    <property type="match status" value="1"/>
</dbReference>
<dbReference type="Pfam" id="PF00206">
    <property type="entry name" value="Lyase_1"/>
    <property type="match status" value="1"/>
</dbReference>
<dbReference type="PRINTS" id="PR00145">
    <property type="entry name" value="ARGSUCLYASE"/>
</dbReference>
<dbReference type="PRINTS" id="PR00149">
    <property type="entry name" value="FUMRATELYASE"/>
</dbReference>
<dbReference type="SUPFAM" id="SSF48557">
    <property type="entry name" value="L-aspartase-like"/>
    <property type="match status" value="1"/>
</dbReference>
<dbReference type="PROSITE" id="PS00163">
    <property type="entry name" value="FUMARATE_LYASES"/>
    <property type="match status" value="1"/>
</dbReference>
<organism>
    <name type="scientific">Herpetosiphon aurantiacus (strain ATCC 23779 / DSM 785 / 114-95)</name>
    <dbReference type="NCBI Taxonomy" id="316274"/>
    <lineage>
        <taxon>Bacteria</taxon>
        <taxon>Bacillati</taxon>
        <taxon>Chloroflexota</taxon>
        <taxon>Chloroflexia</taxon>
        <taxon>Herpetosiphonales</taxon>
        <taxon>Herpetosiphonaceae</taxon>
        <taxon>Herpetosiphon</taxon>
    </lineage>
</organism>
<name>ARLY_HERA2</name>
<feature type="chain" id="PRO_1000089086" description="Argininosuccinate lyase">
    <location>
        <begin position="1"/>
        <end position="454"/>
    </location>
</feature>
<protein>
    <recommendedName>
        <fullName evidence="1">Argininosuccinate lyase</fullName>
        <shortName evidence="1">ASAL</shortName>
        <ecNumber evidence="1">4.3.2.1</ecNumber>
    </recommendedName>
    <alternativeName>
        <fullName evidence="1">Arginosuccinase</fullName>
    </alternativeName>
</protein>
<reference key="1">
    <citation type="journal article" date="2011" name="Stand. Genomic Sci.">
        <title>Complete genome sequence of the filamentous gliding predatory bacterium Herpetosiphon aurantiacus type strain (114-95(T)).</title>
        <authorList>
            <person name="Kiss H."/>
            <person name="Nett M."/>
            <person name="Domin N."/>
            <person name="Martin K."/>
            <person name="Maresca J.A."/>
            <person name="Copeland A."/>
            <person name="Lapidus A."/>
            <person name="Lucas S."/>
            <person name="Berry K.W."/>
            <person name="Glavina Del Rio T."/>
            <person name="Dalin E."/>
            <person name="Tice H."/>
            <person name="Pitluck S."/>
            <person name="Richardson P."/>
            <person name="Bruce D."/>
            <person name="Goodwin L."/>
            <person name="Han C."/>
            <person name="Detter J.C."/>
            <person name="Schmutz J."/>
            <person name="Brettin T."/>
            <person name="Land M."/>
            <person name="Hauser L."/>
            <person name="Kyrpides N.C."/>
            <person name="Ivanova N."/>
            <person name="Goeker M."/>
            <person name="Woyke T."/>
            <person name="Klenk H.P."/>
            <person name="Bryant D.A."/>
        </authorList>
    </citation>
    <scope>NUCLEOTIDE SEQUENCE [LARGE SCALE GENOMIC DNA]</scope>
    <source>
        <strain>ATCC 23779 / DSM 785 / 114-95</strain>
    </source>
</reference>
<proteinExistence type="inferred from homology"/>
<evidence type="ECO:0000255" key="1">
    <source>
        <dbReference type="HAMAP-Rule" id="MF_00006"/>
    </source>
</evidence>
<sequence>MWGGRFSGSLAEHMRLFNDSFPIDRRLWAEDIRGSIAWANGLERAGILQAAECQELIAGLRQVYQEFEEGLFLPLTSDEDIHTAVERRLGDFIGALAGKLHTGRSRNDQVATDTRLWTLGALKLADDLIRDVQAALLEQAKAVGEAMLPGYTHLQRAQPVLLSHALLAHFWRLDRDRQRLHDATKRVSVLPLGSGALAGTAFAVDRAALAAELGFTSISQNSLDATSDRDYIVEILAAIALLGVHISQLAEDWIIWSSSEWGFVALDDAYSTGSSLMPQKKNPDSLELARGKSGRLIGNLITVLTLLKGLPSAYDKDLQEDKAPLFDAIDTLSLTLPVVAGAIRTARFNTERMESALDDAMLATDVADELVRRGVPFREAHHIAGRLVREAEQRGVGMRQLPAESFVAAHPSLTDVAGLFDFARSVAMRDVPGGTAPNAVRDQLIAAQHVLAEG</sequence>